<accession>Q89DJ9</accession>
<reference key="1">
    <citation type="journal article" date="2002" name="DNA Res.">
        <title>Complete genomic sequence of nitrogen-fixing symbiotic bacterium Bradyrhizobium japonicum USDA110.</title>
        <authorList>
            <person name="Kaneko T."/>
            <person name="Nakamura Y."/>
            <person name="Sato S."/>
            <person name="Minamisawa K."/>
            <person name="Uchiumi T."/>
            <person name="Sasamoto S."/>
            <person name="Watanabe A."/>
            <person name="Idesawa K."/>
            <person name="Iriguchi M."/>
            <person name="Kawashima K."/>
            <person name="Kohara M."/>
            <person name="Matsumoto M."/>
            <person name="Shimpo S."/>
            <person name="Tsuruoka H."/>
            <person name="Wada T."/>
            <person name="Yamada M."/>
            <person name="Tabata S."/>
        </authorList>
    </citation>
    <scope>NUCLEOTIDE SEQUENCE [LARGE SCALE GENOMIC DNA]</scope>
    <source>
        <strain>JCM 10833 / BCRC 13528 / IAM 13628 / NBRC 14792 / USDA 110</strain>
    </source>
</reference>
<sequence length="201" mass="21835">MRLFVGLGNPGAKYARNRHNIGFMAVDEIARRHGFSPWRRRFQGETSEGALGTERVILLKPTTYMNDSGRSVQEAAGFFKIAPGDVTVFHDELELPPGKVRVKVGGGIAGHNGLRSISAHIGNDYRRVRLGIGHPGVKELVHGHVLSDFAKADNDWVATLCDAVAEHAALIAKGTDATFANRVHLAMQAKGFLTKDDNGKE</sequence>
<gene>
    <name evidence="1" type="primary">pth</name>
    <name type="ordered locus">bll7440</name>
</gene>
<dbReference type="EC" id="3.1.1.29" evidence="1"/>
<dbReference type="EMBL" id="BA000040">
    <property type="protein sequence ID" value="BAC52705.1"/>
    <property type="molecule type" value="Genomic_DNA"/>
</dbReference>
<dbReference type="RefSeq" id="NP_774080.1">
    <property type="nucleotide sequence ID" value="NC_004463.1"/>
</dbReference>
<dbReference type="RefSeq" id="WP_011090174.1">
    <property type="nucleotide sequence ID" value="NC_004463.1"/>
</dbReference>
<dbReference type="SMR" id="Q89DJ9"/>
<dbReference type="FunCoup" id="Q89DJ9">
    <property type="interactions" value="463"/>
</dbReference>
<dbReference type="STRING" id="224911.AAV28_34890"/>
<dbReference type="EnsemblBacteria" id="BAC52705">
    <property type="protein sequence ID" value="BAC52705"/>
    <property type="gene ID" value="BAC52705"/>
</dbReference>
<dbReference type="GeneID" id="46494398"/>
<dbReference type="KEGG" id="bja:bll7440"/>
<dbReference type="PATRIC" id="fig|224911.44.peg.7539"/>
<dbReference type="eggNOG" id="COG0193">
    <property type="taxonomic scope" value="Bacteria"/>
</dbReference>
<dbReference type="HOGENOM" id="CLU_062456_1_0_5"/>
<dbReference type="InParanoid" id="Q89DJ9"/>
<dbReference type="OrthoDB" id="9800507at2"/>
<dbReference type="PhylomeDB" id="Q89DJ9"/>
<dbReference type="Proteomes" id="UP000002526">
    <property type="component" value="Chromosome"/>
</dbReference>
<dbReference type="GO" id="GO:0005737">
    <property type="term" value="C:cytoplasm"/>
    <property type="evidence" value="ECO:0007669"/>
    <property type="project" value="UniProtKB-SubCell"/>
</dbReference>
<dbReference type="GO" id="GO:0004045">
    <property type="term" value="F:peptidyl-tRNA hydrolase activity"/>
    <property type="evidence" value="ECO:0000318"/>
    <property type="project" value="GO_Central"/>
</dbReference>
<dbReference type="GO" id="GO:0000049">
    <property type="term" value="F:tRNA binding"/>
    <property type="evidence" value="ECO:0007669"/>
    <property type="project" value="UniProtKB-UniRule"/>
</dbReference>
<dbReference type="GO" id="GO:0006515">
    <property type="term" value="P:protein quality control for misfolded or incompletely synthesized proteins"/>
    <property type="evidence" value="ECO:0007669"/>
    <property type="project" value="UniProtKB-UniRule"/>
</dbReference>
<dbReference type="GO" id="GO:0072344">
    <property type="term" value="P:rescue of stalled ribosome"/>
    <property type="evidence" value="ECO:0007669"/>
    <property type="project" value="UniProtKB-UniRule"/>
</dbReference>
<dbReference type="CDD" id="cd00462">
    <property type="entry name" value="PTH"/>
    <property type="match status" value="1"/>
</dbReference>
<dbReference type="FunFam" id="3.40.50.1470:FF:000001">
    <property type="entry name" value="Peptidyl-tRNA hydrolase"/>
    <property type="match status" value="1"/>
</dbReference>
<dbReference type="Gene3D" id="3.40.50.1470">
    <property type="entry name" value="Peptidyl-tRNA hydrolase"/>
    <property type="match status" value="1"/>
</dbReference>
<dbReference type="HAMAP" id="MF_00083">
    <property type="entry name" value="Pept_tRNA_hydro_bact"/>
    <property type="match status" value="1"/>
</dbReference>
<dbReference type="InterPro" id="IPR001328">
    <property type="entry name" value="Pept_tRNA_hydro"/>
</dbReference>
<dbReference type="InterPro" id="IPR018171">
    <property type="entry name" value="Pept_tRNA_hydro_CS"/>
</dbReference>
<dbReference type="InterPro" id="IPR036416">
    <property type="entry name" value="Pept_tRNA_hydro_sf"/>
</dbReference>
<dbReference type="NCBIfam" id="TIGR00447">
    <property type="entry name" value="pth"/>
    <property type="match status" value="1"/>
</dbReference>
<dbReference type="PANTHER" id="PTHR17224">
    <property type="entry name" value="PEPTIDYL-TRNA HYDROLASE"/>
    <property type="match status" value="1"/>
</dbReference>
<dbReference type="PANTHER" id="PTHR17224:SF1">
    <property type="entry name" value="PEPTIDYL-TRNA HYDROLASE"/>
    <property type="match status" value="1"/>
</dbReference>
<dbReference type="Pfam" id="PF01195">
    <property type="entry name" value="Pept_tRNA_hydro"/>
    <property type="match status" value="1"/>
</dbReference>
<dbReference type="SUPFAM" id="SSF53178">
    <property type="entry name" value="Peptidyl-tRNA hydrolase-like"/>
    <property type="match status" value="1"/>
</dbReference>
<dbReference type="PROSITE" id="PS01195">
    <property type="entry name" value="PEPT_TRNA_HYDROL_1"/>
    <property type="match status" value="1"/>
</dbReference>
<dbReference type="PROSITE" id="PS01196">
    <property type="entry name" value="PEPT_TRNA_HYDROL_2"/>
    <property type="match status" value="1"/>
</dbReference>
<proteinExistence type="inferred from homology"/>
<name>PTH_BRADU</name>
<keyword id="KW-0963">Cytoplasm</keyword>
<keyword id="KW-0378">Hydrolase</keyword>
<keyword id="KW-1185">Reference proteome</keyword>
<keyword id="KW-0694">RNA-binding</keyword>
<keyword id="KW-0820">tRNA-binding</keyword>
<feature type="chain" id="PRO_0000187703" description="Peptidyl-tRNA hydrolase">
    <location>
        <begin position="1"/>
        <end position="201"/>
    </location>
</feature>
<feature type="active site" description="Proton acceptor" evidence="1">
    <location>
        <position position="19"/>
    </location>
</feature>
<feature type="binding site" evidence="1">
    <location>
        <position position="14"/>
    </location>
    <ligand>
        <name>tRNA</name>
        <dbReference type="ChEBI" id="CHEBI:17843"/>
    </ligand>
</feature>
<feature type="binding site" evidence="1">
    <location>
        <position position="64"/>
    </location>
    <ligand>
        <name>tRNA</name>
        <dbReference type="ChEBI" id="CHEBI:17843"/>
    </ligand>
</feature>
<feature type="binding site" evidence="1">
    <location>
        <position position="66"/>
    </location>
    <ligand>
        <name>tRNA</name>
        <dbReference type="ChEBI" id="CHEBI:17843"/>
    </ligand>
</feature>
<feature type="binding site" evidence="1">
    <location>
        <position position="112"/>
    </location>
    <ligand>
        <name>tRNA</name>
        <dbReference type="ChEBI" id="CHEBI:17843"/>
    </ligand>
</feature>
<feature type="site" description="Discriminates between blocked and unblocked aminoacyl-tRNA" evidence="1">
    <location>
        <position position="9"/>
    </location>
</feature>
<feature type="site" description="Stabilizes the basic form of H active site to accept a proton" evidence="1">
    <location>
        <position position="91"/>
    </location>
</feature>
<protein>
    <recommendedName>
        <fullName evidence="1">Peptidyl-tRNA hydrolase</fullName>
        <shortName evidence="1">Pth</shortName>
        <ecNumber evidence="1">3.1.1.29</ecNumber>
    </recommendedName>
</protein>
<organism>
    <name type="scientific">Bradyrhizobium diazoefficiens (strain JCM 10833 / BCRC 13528 / IAM 13628 / NBRC 14792 / USDA 110)</name>
    <dbReference type="NCBI Taxonomy" id="224911"/>
    <lineage>
        <taxon>Bacteria</taxon>
        <taxon>Pseudomonadati</taxon>
        <taxon>Pseudomonadota</taxon>
        <taxon>Alphaproteobacteria</taxon>
        <taxon>Hyphomicrobiales</taxon>
        <taxon>Nitrobacteraceae</taxon>
        <taxon>Bradyrhizobium</taxon>
    </lineage>
</organism>
<evidence type="ECO:0000255" key="1">
    <source>
        <dbReference type="HAMAP-Rule" id="MF_00083"/>
    </source>
</evidence>
<comment type="function">
    <text evidence="1">Hydrolyzes ribosome-free peptidyl-tRNAs (with 1 or more amino acids incorporated), which drop off the ribosome during protein synthesis, or as a result of ribosome stalling.</text>
</comment>
<comment type="function">
    <text evidence="1">Catalyzes the release of premature peptidyl moieties from peptidyl-tRNA molecules trapped in stalled 50S ribosomal subunits, and thus maintains levels of free tRNAs and 50S ribosomes.</text>
</comment>
<comment type="catalytic activity">
    <reaction evidence="1">
        <text>an N-acyl-L-alpha-aminoacyl-tRNA + H2O = an N-acyl-L-amino acid + a tRNA + H(+)</text>
        <dbReference type="Rhea" id="RHEA:54448"/>
        <dbReference type="Rhea" id="RHEA-COMP:10123"/>
        <dbReference type="Rhea" id="RHEA-COMP:13883"/>
        <dbReference type="ChEBI" id="CHEBI:15377"/>
        <dbReference type="ChEBI" id="CHEBI:15378"/>
        <dbReference type="ChEBI" id="CHEBI:59874"/>
        <dbReference type="ChEBI" id="CHEBI:78442"/>
        <dbReference type="ChEBI" id="CHEBI:138191"/>
        <dbReference type="EC" id="3.1.1.29"/>
    </reaction>
</comment>
<comment type="subunit">
    <text evidence="1">Monomer.</text>
</comment>
<comment type="subcellular location">
    <subcellularLocation>
        <location evidence="1">Cytoplasm</location>
    </subcellularLocation>
</comment>
<comment type="similarity">
    <text evidence="1">Belongs to the PTH family.</text>
</comment>